<sequence>MEQSHQNLQSQFFIEHILQILPHRYPMLLVDRIIELQANQKIVAYKNITFNEDVFNGHFPNKPIFPGVLIVEGMAQTGGFLAFTSLWGFDPEIAKTKIVYFMTIDKVKFRIPVTPGDRLEYHLEVLKHKGMIWQVGGTAQVDGKVVAEAELKAMIAERE</sequence>
<gene>
    <name evidence="1" type="primary">fabZ</name>
    <name type="ordered locus">jhp_1290</name>
</gene>
<evidence type="ECO:0000255" key="1">
    <source>
        <dbReference type="HAMAP-Rule" id="MF_00406"/>
    </source>
</evidence>
<organism>
    <name type="scientific">Helicobacter pylori (strain J99 / ATCC 700824)</name>
    <name type="common">Campylobacter pylori J99</name>
    <dbReference type="NCBI Taxonomy" id="85963"/>
    <lineage>
        <taxon>Bacteria</taxon>
        <taxon>Pseudomonadati</taxon>
        <taxon>Campylobacterota</taxon>
        <taxon>Epsilonproteobacteria</taxon>
        <taxon>Campylobacterales</taxon>
        <taxon>Helicobacteraceae</taxon>
        <taxon>Helicobacter</taxon>
    </lineage>
</organism>
<feature type="chain" id="PRO_0000091689" description="3-hydroxyacyl-[acyl-carrier-protein] dehydratase FabZ">
    <location>
        <begin position="1"/>
        <end position="159"/>
    </location>
</feature>
<feature type="active site" evidence="1">
    <location>
        <position position="58"/>
    </location>
</feature>
<dbReference type="EC" id="4.2.1.59" evidence="1"/>
<dbReference type="EMBL" id="AE001439">
    <property type="protein sequence ID" value="AAD06864.1"/>
    <property type="molecule type" value="Genomic_DNA"/>
</dbReference>
<dbReference type="PIR" id="H71826">
    <property type="entry name" value="H71826"/>
</dbReference>
<dbReference type="RefSeq" id="WP_000438079.1">
    <property type="nucleotide sequence ID" value="NZ_CP011330.1"/>
</dbReference>
<dbReference type="SMR" id="Q9ZJL6"/>
<dbReference type="KEGG" id="hpj:jhp_1290"/>
<dbReference type="PATRIC" id="fig|85963.30.peg.1278"/>
<dbReference type="eggNOG" id="COG0764">
    <property type="taxonomic scope" value="Bacteria"/>
</dbReference>
<dbReference type="Proteomes" id="UP000000804">
    <property type="component" value="Chromosome"/>
</dbReference>
<dbReference type="GO" id="GO:0005737">
    <property type="term" value="C:cytoplasm"/>
    <property type="evidence" value="ECO:0007669"/>
    <property type="project" value="UniProtKB-SubCell"/>
</dbReference>
<dbReference type="GO" id="GO:0016020">
    <property type="term" value="C:membrane"/>
    <property type="evidence" value="ECO:0007669"/>
    <property type="project" value="GOC"/>
</dbReference>
<dbReference type="GO" id="GO:0019171">
    <property type="term" value="F:(3R)-hydroxyacyl-[acyl-carrier-protein] dehydratase activity"/>
    <property type="evidence" value="ECO:0007669"/>
    <property type="project" value="UniProtKB-EC"/>
</dbReference>
<dbReference type="GO" id="GO:0006633">
    <property type="term" value="P:fatty acid biosynthetic process"/>
    <property type="evidence" value="ECO:0007669"/>
    <property type="project" value="UniProtKB-UniRule"/>
</dbReference>
<dbReference type="GO" id="GO:0009245">
    <property type="term" value="P:lipid A biosynthetic process"/>
    <property type="evidence" value="ECO:0007669"/>
    <property type="project" value="UniProtKB-UniRule"/>
</dbReference>
<dbReference type="CDD" id="cd01288">
    <property type="entry name" value="FabZ"/>
    <property type="match status" value="1"/>
</dbReference>
<dbReference type="FunFam" id="3.10.129.10:FF:000001">
    <property type="entry name" value="3-hydroxyacyl-[acyl-carrier-protein] dehydratase FabZ"/>
    <property type="match status" value="1"/>
</dbReference>
<dbReference type="Gene3D" id="3.10.129.10">
    <property type="entry name" value="Hotdog Thioesterase"/>
    <property type="match status" value="1"/>
</dbReference>
<dbReference type="HAMAP" id="MF_00406">
    <property type="entry name" value="FabZ"/>
    <property type="match status" value="1"/>
</dbReference>
<dbReference type="InterPro" id="IPR013114">
    <property type="entry name" value="FabA_FabZ"/>
</dbReference>
<dbReference type="InterPro" id="IPR010084">
    <property type="entry name" value="FabZ"/>
</dbReference>
<dbReference type="InterPro" id="IPR029069">
    <property type="entry name" value="HotDog_dom_sf"/>
</dbReference>
<dbReference type="NCBIfam" id="TIGR01750">
    <property type="entry name" value="fabZ"/>
    <property type="match status" value="1"/>
</dbReference>
<dbReference type="NCBIfam" id="NF000582">
    <property type="entry name" value="PRK00006.1"/>
    <property type="match status" value="1"/>
</dbReference>
<dbReference type="PANTHER" id="PTHR30272">
    <property type="entry name" value="3-HYDROXYACYL-[ACYL-CARRIER-PROTEIN] DEHYDRATASE"/>
    <property type="match status" value="1"/>
</dbReference>
<dbReference type="PANTHER" id="PTHR30272:SF1">
    <property type="entry name" value="3-HYDROXYACYL-[ACYL-CARRIER-PROTEIN] DEHYDRATASE"/>
    <property type="match status" value="1"/>
</dbReference>
<dbReference type="Pfam" id="PF07977">
    <property type="entry name" value="FabA"/>
    <property type="match status" value="1"/>
</dbReference>
<dbReference type="SUPFAM" id="SSF54637">
    <property type="entry name" value="Thioesterase/thiol ester dehydrase-isomerase"/>
    <property type="match status" value="1"/>
</dbReference>
<reference key="1">
    <citation type="journal article" date="1999" name="Nature">
        <title>Genomic sequence comparison of two unrelated isolates of the human gastric pathogen Helicobacter pylori.</title>
        <authorList>
            <person name="Alm R.A."/>
            <person name="Ling L.-S.L."/>
            <person name="Moir D.T."/>
            <person name="King B.L."/>
            <person name="Brown E.D."/>
            <person name="Doig P.C."/>
            <person name="Smith D.R."/>
            <person name="Noonan B."/>
            <person name="Guild B.C."/>
            <person name="deJonge B.L."/>
            <person name="Carmel G."/>
            <person name="Tummino P.J."/>
            <person name="Caruso A."/>
            <person name="Uria-Nickelsen M."/>
            <person name="Mills D.M."/>
            <person name="Ives C."/>
            <person name="Gibson R."/>
            <person name="Merberg D."/>
            <person name="Mills S.D."/>
            <person name="Jiang Q."/>
            <person name="Taylor D.E."/>
            <person name="Vovis G.F."/>
            <person name="Trust T.J."/>
        </authorList>
    </citation>
    <scope>NUCLEOTIDE SEQUENCE [LARGE SCALE GENOMIC DNA]</scope>
    <source>
        <strain>J99 / ATCC 700824</strain>
    </source>
</reference>
<protein>
    <recommendedName>
        <fullName evidence="1">3-hydroxyacyl-[acyl-carrier-protein] dehydratase FabZ</fullName>
        <ecNumber evidence="1">4.2.1.59</ecNumber>
    </recommendedName>
    <alternativeName>
        <fullName evidence="1">(3R)-hydroxymyristoyl-[acyl-carrier-protein] dehydratase</fullName>
        <shortName evidence="1">(3R)-hydroxymyristoyl-ACP dehydrase</shortName>
    </alternativeName>
    <alternativeName>
        <fullName evidence="1">Beta-hydroxyacyl-ACP dehydratase</fullName>
    </alternativeName>
</protein>
<proteinExistence type="inferred from homology"/>
<keyword id="KW-0963">Cytoplasm</keyword>
<keyword id="KW-0441">Lipid A biosynthesis</keyword>
<keyword id="KW-0444">Lipid biosynthesis</keyword>
<keyword id="KW-0443">Lipid metabolism</keyword>
<keyword id="KW-0456">Lyase</keyword>
<comment type="function">
    <text evidence="1">Involved in unsaturated fatty acids biosynthesis. Catalyzes the dehydration of short chain beta-hydroxyacyl-ACPs and long chain saturated and unsaturated beta-hydroxyacyl-ACPs.</text>
</comment>
<comment type="catalytic activity">
    <reaction evidence="1">
        <text>a (3R)-hydroxyacyl-[ACP] = a (2E)-enoyl-[ACP] + H2O</text>
        <dbReference type="Rhea" id="RHEA:13097"/>
        <dbReference type="Rhea" id="RHEA-COMP:9925"/>
        <dbReference type="Rhea" id="RHEA-COMP:9945"/>
        <dbReference type="ChEBI" id="CHEBI:15377"/>
        <dbReference type="ChEBI" id="CHEBI:78784"/>
        <dbReference type="ChEBI" id="CHEBI:78827"/>
        <dbReference type="EC" id="4.2.1.59"/>
    </reaction>
</comment>
<comment type="subcellular location">
    <subcellularLocation>
        <location evidence="1">Cytoplasm</location>
    </subcellularLocation>
</comment>
<comment type="similarity">
    <text evidence="1">Belongs to the thioester dehydratase family. FabZ subfamily.</text>
</comment>
<accession>Q9ZJL6</accession>
<name>FABZ_HELPJ</name>